<feature type="chain" id="PRO_1000018894" description="Bifunctional purine biosynthesis protein PurH">
    <location>
        <begin position="1"/>
        <end position="521"/>
    </location>
</feature>
<feature type="domain" description="MGS-like" evidence="2">
    <location>
        <begin position="1"/>
        <end position="145"/>
    </location>
</feature>
<proteinExistence type="inferred from homology"/>
<name>PUR9_JANMA</name>
<gene>
    <name evidence="1" type="primary">purH</name>
    <name type="ordered locus">mma_0308</name>
</gene>
<accession>A6SUQ1</accession>
<comment type="catalytic activity">
    <reaction evidence="1">
        <text>(6R)-10-formyltetrahydrofolate + 5-amino-1-(5-phospho-beta-D-ribosyl)imidazole-4-carboxamide = 5-formamido-1-(5-phospho-D-ribosyl)imidazole-4-carboxamide + (6S)-5,6,7,8-tetrahydrofolate</text>
        <dbReference type="Rhea" id="RHEA:22192"/>
        <dbReference type="ChEBI" id="CHEBI:57453"/>
        <dbReference type="ChEBI" id="CHEBI:58467"/>
        <dbReference type="ChEBI" id="CHEBI:58475"/>
        <dbReference type="ChEBI" id="CHEBI:195366"/>
        <dbReference type="EC" id="2.1.2.3"/>
    </reaction>
</comment>
<comment type="catalytic activity">
    <reaction evidence="1">
        <text>IMP + H2O = 5-formamido-1-(5-phospho-D-ribosyl)imidazole-4-carboxamide</text>
        <dbReference type="Rhea" id="RHEA:18445"/>
        <dbReference type="ChEBI" id="CHEBI:15377"/>
        <dbReference type="ChEBI" id="CHEBI:58053"/>
        <dbReference type="ChEBI" id="CHEBI:58467"/>
        <dbReference type="EC" id="3.5.4.10"/>
    </reaction>
</comment>
<comment type="pathway">
    <text evidence="1">Purine metabolism; IMP biosynthesis via de novo pathway; 5-formamido-1-(5-phospho-D-ribosyl)imidazole-4-carboxamide from 5-amino-1-(5-phospho-D-ribosyl)imidazole-4-carboxamide (10-formyl THF route): step 1/1.</text>
</comment>
<comment type="pathway">
    <text evidence="1">Purine metabolism; IMP biosynthesis via de novo pathway; IMP from 5-formamido-1-(5-phospho-D-ribosyl)imidazole-4-carboxamide: step 1/1.</text>
</comment>
<comment type="domain">
    <text evidence="1">The IMP cyclohydrolase activity resides in the N-terminal region.</text>
</comment>
<comment type="similarity">
    <text evidence="1">Belongs to the PurH family.</text>
</comment>
<keyword id="KW-0378">Hydrolase</keyword>
<keyword id="KW-0511">Multifunctional enzyme</keyword>
<keyword id="KW-0658">Purine biosynthesis</keyword>
<keyword id="KW-0808">Transferase</keyword>
<reference key="1">
    <citation type="journal article" date="2007" name="PLoS Genet.">
        <title>Genome analysis of Minibacterium massiliensis highlights the convergent evolution of water-living bacteria.</title>
        <authorList>
            <person name="Audic S."/>
            <person name="Robert C."/>
            <person name="Campagna B."/>
            <person name="Parinello H."/>
            <person name="Claverie J.-M."/>
            <person name="Raoult D."/>
            <person name="Drancourt M."/>
        </authorList>
    </citation>
    <scope>NUCLEOTIDE SEQUENCE [LARGE SCALE GENOMIC DNA]</scope>
    <source>
        <strain>Marseille</strain>
    </source>
</reference>
<sequence>MIKQALISVSDKTGVLEFARALSGMGVNILSTGGTAKLLAENGISVTEVADYTGFPEMLDGRVKTLHPKVHGGILARRDFAEHVSALEKHNIPTIDMVVVNLYPFQQTVAREHCSLEDAIENIDIGGPAMLRSSAKNHKDVIVICDPTDYSQVLGELSANQGEVSYETKFTLAKKVFAHTAQYDGAITNYFTSLGADKQHATRSSYPATLNLHFEKVQEMRYGENPHQSAAFYRESNPQVGALANYTQLQGKELSYNNIADADAAWECVKTFDESACVIIKHANPCGVAVGASPLEAYSKALQTDPTSAFGGIIAFNRELDGNAAEAVAKQFVEVLIAPSFSEKAKQIFAGKQNVRLLEIPLGNAVNAHDFKRVGGGLLVQSPDAKNVVLAELKVVSKKQPTPQQLQDLMFAWRVAKFVKSNAIVFCANGMTMGVGAGQMSRIDSARIASIKAQNAGLSLVGTAVASDAFFPFRDGLDVVVAAGATSVIHPGGSMRDQEVIDAADEQGVVMLMTGTRHFRH</sequence>
<evidence type="ECO:0000255" key="1">
    <source>
        <dbReference type="HAMAP-Rule" id="MF_00139"/>
    </source>
</evidence>
<evidence type="ECO:0000255" key="2">
    <source>
        <dbReference type="PROSITE-ProRule" id="PRU01202"/>
    </source>
</evidence>
<dbReference type="EC" id="2.1.2.3" evidence="1"/>
<dbReference type="EC" id="3.5.4.10" evidence="1"/>
<dbReference type="EMBL" id="CP000269">
    <property type="protein sequence ID" value="ABR88426.1"/>
    <property type="molecule type" value="Genomic_DNA"/>
</dbReference>
<dbReference type="RefSeq" id="WP_012078173.1">
    <property type="nucleotide sequence ID" value="NC_009659.1"/>
</dbReference>
<dbReference type="SMR" id="A6SUQ1"/>
<dbReference type="STRING" id="375286.mma_0308"/>
<dbReference type="KEGG" id="mms:mma_0308"/>
<dbReference type="eggNOG" id="COG0138">
    <property type="taxonomic scope" value="Bacteria"/>
</dbReference>
<dbReference type="HOGENOM" id="CLU_016316_5_2_4"/>
<dbReference type="OrthoDB" id="9802065at2"/>
<dbReference type="UniPathway" id="UPA00074">
    <property type="reaction ID" value="UER00133"/>
</dbReference>
<dbReference type="UniPathway" id="UPA00074">
    <property type="reaction ID" value="UER00135"/>
</dbReference>
<dbReference type="Proteomes" id="UP000006388">
    <property type="component" value="Chromosome"/>
</dbReference>
<dbReference type="GO" id="GO:0005829">
    <property type="term" value="C:cytosol"/>
    <property type="evidence" value="ECO:0007669"/>
    <property type="project" value="TreeGrafter"/>
</dbReference>
<dbReference type="GO" id="GO:0003937">
    <property type="term" value="F:IMP cyclohydrolase activity"/>
    <property type="evidence" value="ECO:0007669"/>
    <property type="project" value="UniProtKB-UniRule"/>
</dbReference>
<dbReference type="GO" id="GO:0004643">
    <property type="term" value="F:phosphoribosylaminoimidazolecarboxamide formyltransferase activity"/>
    <property type="evidence" value="ECO:0007669"/>
    <property type="project" value="UniProtKB-UniRule"/>
</dbReference>
<dbReference type="GO" id="GO:0006189">
    <property type="term" value="P:'de novo' IMP biosynthetic process"/>
    <property type="evidence" value="ECO:0007669"/>
    <property type="project" value="UniProtKB-UniRule"/>
</dbReference>
<dbReference type="CDD" id="cd01421">
    <property type="entry name" value="IMPCH"/>
    <property type="match status" value="1"/>
</dbReference>
<dbReference type="FunFam" id="3.40.140.20:FF:000001">
    <property type="entry name" value="Bifunctional purine biosynthesis protein PurH"/>
    <property type="match status" value="1"/>
</dbReference>
<dbReference type="FunFam" id="3.40.140.20:FF:000002">
    <property type="entry name" value="Bifunctional purine biosynthesis protein PurH"/>
    <property type="match status" value="1"/>
</dbReference>
<dbReference type="FunFam" id="3.40.50.1380:FF:000001">
    <property type="entry name" value="Bifunctional purine biosynthesis protein PurH"/>
    <property type="match status" value="1"/>
</dbReference>
<dbReference type="Gene3D" id="3.40.140.20">
    <property type="match status" value="2"/>
</dbReference>
<dbReference type="Gene3D" id="3.40.50.1380">
    <property type="entry name" value="Methylglyoxal synthase-like domain"/>
    <property type="match status" value="1"/>
</dbReference>
<dbReference type="HAMAP" id="MF_00139">
    <property type="entry name" value="PurH"/>
    <property type="match status" value="1"/>
</dbReference>
<dbReference type="InterPro" id="IPR024051">
    <property type="entry name" value="AICAR_Tfase_dup_dom_sf"/>
</dbReference>
<dbReference type="InterPro" id="IPR016193">
    <property type="entry name" value="Cytidine_deaminase-like"/>
</dbReference>
<dbReference type="InterPro" id="IPR011607">
    <property type="entry name" value="MGS-like_dom"/>
</dbReference>
<dbReference type="InterPro" id="IPR036914">
    <property type="entry name" value="MGS-like_dom_sf"/>
</dbReference>
<dbReference type="InterPro" id="IPR002695">
    <property type="entry name" value="PurH-like"/>
</dbReference>
<dbReference type="NCBIfam" id="NF002049">
    <property type="entry name" value="PRK00881.1"/>
    <property type="match status" value="1"/>
</dbReference>
<dbReference type="NCBIfam" id="TIGR00355">
    <property type="entry name" value="purH"/>
    <property type="match status" value="1"/>
</dbReference>
<dbReference type="PANTHER" id="PTHR11692:SF0">
    <property type="entry name" value="BIFUNCTIONAL PURINE BIOSYNTHESIS PROTEIN ATIC"/>
    <property type="match status" value="1"/>
</dbReference>
<dbReference type="PANTHER" id="PTHR11692">
    <property type="entry name" value="BIFUNCTIONAL PURINE BIOSYNTHESIS PROTEIN PURH"/>
    <property type="match status" value="1"/>
</dbReference>
<dbReference type="Pfam" id="PF01808">
    <property type="entry name" value="AICARFT_IMPCHas"/>
    <property type="match status" value="1"/>
</dbReference>
<dbReference type="Pfam" id="PF02142">
    <property type="entry name" value="MGS"/>
    <property type="match status" value="1"/>
</dbReference>
<dbReference type="PIRSF" id="PIRSF000414">
    <property type="entry name" value="AICARFT_IMPCHas"/>
    <property type="match status" value="1"/>
</dbReference>
<dbReference type="SMART" id="SM00798">
    <property type="entry name" value="AICARFT_IMPCHas"/>
    <property type="match status" value="1"/>
</dbReference>
<dbReference type="SMART" id="SM00851">
    <property type="entry name" value="MGS"/>
    <property type="match status" value="1"/>
</dbReference>
<dbReference type="SUPFAM" id="SSF53927">
    <property type="entry name" value="Cytidine deaminase-like"/>
    <property type="match status" value="1"/>
</dbReference>
<dbReference type="SUPFAM" id="SSF52335">
    <property type="entry name" value="Methylglyoxal synthase-like"/>
    <property type="match status" value="1"/>
</dbReference>
<dbReference type="PROSITE" id="PS51855">
    <property type="entry name" value="MGS"/>
    <property type="match status" value="1"/>
</dbReference>
<organism>
    <name type="scientific">Janthinobacterium sp. (strain Marseille)</name>
    <name type="common">Minibacterium massiliensis</name>
    <dbReference type="NCBI Taxonomy" id="375286"/>
    <lineage>
        <taxon>Bacteria</taxon>
        <taxon>Pseudomonadati</taxon>
        <taxon>Pseudomonadota</taxon>
        <taxon>Betaproteobacteria</taxon>
        <taxon>Burkholderiales</taxon>
        <taxon>Oxalobacteraceae</taxon>
        <taxon>Janthinobacterium</taxon>
    </lineage>
</organism>
<protein>
    <recommendedName>
        <fullName evidence="1">Bifunctional purine biosynthesis protein PurH</fullName>
    </recommendedName>
    <domain>
        <recommendedName>
            <fullName evidence="1">Phosphoribosylaminoimidazolecarboxamide formyltransferase</fullName>
            <ecNumber evidence="1">2.1.2.3</ecNumber>
        </recommendedName>
        <alternativeName>
            <fullName evidence="1">AICAR transformylase</fullName>
        </alternativeName>
    </domain>
    <domain>
        <recommendedName>
            <fullName evidence="1">IMP cyclohydrolase</fullName>
            <ecNumber evidence="1">3.5.4.10</ecNumber>
        </recommendedName>
        <alternativeName>
            <fullName evidence="1">ATIC</fullName>
        </alternativeName>
        <alternativeName>
            <fullName evidence="1">IMP synthase</fullName>
        </alternativeName>
        <alternativeName>
            <fullName evidence="1">Inosinicase</fullName>
        </alternativeName>
    </domain>
</protein>